<organism>
    <name type="scientific">Mycolicibacterium vanbaalenii (strain DSM 7251 / JCM 13017 / BCRC 16820 / KCTC 9966 / NRRL B-24157 / PYR-1)</name>
    <name type="common">Mycobacterium vanbaalenii</name>
    <dbReference type="NCBI Taxonomy" id="350058"/>
    <lineage>
        <taxon>Bacteria</taxon>
        <taxon>Bacillati</taxon>
        <taxon>Actinomycetota</taxon>
        <taxon>Actinomycetes</taxon>
        <taxon>Mycobacteriales</taxon>
        <taxon>Mycobacteriaceae</taxon>
        <taxon>Mycolicibacterium</taxon>
    </lineage>
</organism>
<protein>
    <recommendedName>
        <fullName evidence="1">Phosphoribosylaminoimidazole-succinocarboxamide synthase</fullName>
        <ecNumber evidence="1">6.3.2.6</ecNumber>
    </recommendedName>
    <alternativeName>
        <fullName evidence="1">SAICAR synthetase</fullName>
    </alternativeName>
</protein>
<keyword id="KW-0067">ATP-binding</keyword>
<keyword id="KW-0436">Ligase</keyword>
<keyword id="KW-0547">Nucleotide-binding</keyword>
<keyword id="KW-0658">Purine biosynthesis</keyword>
<dbReference type="EC" id="6.3.2.6" evidence="1"/>
<dbReference type="EMBL" id="CP000511">
    <property type="protein sequence ID" value="ABM15909.1"/>
    <property type="molecule type" value="Genomic_DNA"/>
</dbReference>
<dbReference type="RefSeq" id="WP_011782279.1">
    <property type="nucleotide sequence ID" value="NZ_JACKSD010000224.1"/>
</dbReference>
<dbReference type="SMR" id="A1TFF9"/>
<dbReference type="STRING" id="350058.Mvan_5138"/>
<dbReference type="KEGG" id="mva:Mvan_5138"/>
<dbReference type="eggNOG" id="COG0152">
    <property type="taxonomic scope" value="Bacteria"/>
</dbReference>
<dbReference type="HOGENOM" id="CLU_045637_0_0_11"/>
<dbReference type="UniPathway" id="UPA00074">
    <property type="reaction ID" value="UER00131"/>
</dbReference>
<dbReference type="Proteomes" id="UP000009159">
    <property type="component" value="Chromosome"/>
</dbReference>
<dbReference type="GO" id="GO:0005737">
    <property type="term" value="C:cytoplasm"/>
    <property type="evidence" value="ECO:0007669"/>
    <property type="project" value="TreeGrafter"/>
</dbReference>
<dbReference type="GO" id="GO:0005524">
    <property type="term" value="F:ATP binding"/>
    <property type="evidence" value="ECO:0007669"/>
    <property type="project" value="UniProtKB-KW"/>
</dbReference>
<dbReference type="GO" id="GO:0004639">
    <property type="term" value="F:phosphoribosylaminoimidazolesuccinocarboxamide synthase activity"/>
    <property type="evidence" value="ECO:0007669"/>
    <property type="project" value="UniProtKB-UniRule"/>
</dbReference>
<dbReference type="GO" id="GO:0006189">
    <property type="term" value="P:'de novo' IMP biosynthetic process"/>
    <property type="evidence" value="ECO:0007669"/>
    <property type="project" value="UniProtKB-UniRule"/>
</dbReference>
<dbReference type="CDD" id="cd01414">
    <property type="entry name" value="SAICAR_synt_Sc"/>
    <property type="match status" value="1"/>
</dbReference>
<dbReference type="FunFam" id="3.30.200.20:FF:000199">
    <property type="entry name" value="Phosphoribosylaminoimidazole-succinocarboxamide synthase"/>
    <property type="match status" value="1"/>
</dbReference>
<dbReference type="FunFam" id="3.30.470.20:FF:000015">
    <property type="entry name" value="Phosphoribosylaminoimidazole-succinocarboxamide synthase"/>
    <property type="match status" value="1"/>
</dbReference>
<dbReference type="Gene3D" id="3.30.470.20">
    <property type="entry name" value="ATP-grasp fold, B domain"/>
    <property type="match status" value="1"/>
</dbReference>
<dbReference type="Gene3D" id="3.30.200.20">
    <property type="entry name" value="Phosphorylase Kinase, domain 1"/>
    <property type="match status" value="1"/>
</dbReference>
<dbReference type="HAMAP" id="MF_00137">
    <property type="entry name" value="SAICAR_synth"/>
    <property type="match status" value="1"/>
</dbReference>
<dbReference type="InterPro" id="IPR028923">
    <property type="entry name" value="SAICAR_synt/ADE2_N"/>
</dbReference>
<dbReference type="InterPro" id="IPR001636">
    <property type="entry name" value="SAICAR_synth"/>
</dbReference>
<dbReference type="InterPro" id="IPR018236">
    <property type="entry name" value="SAICAR_synthetase_CS"/>
</dbReference>
<dbReference type="NCBIfam" id="NF010568">
    <property type="entry name" value="PRK13961.1"/>
    <property type="match status" value="1"/>
</dbReference>
<dbReference type="NCBIfam" id="TIGR00081">
    <property type="entry name" value="purC"/>
    <property type="match status" value="1"/>
</dbReference>
<dbReference type="PANTHER" id="PTHR43700">
    <property type="entry name" value="PHOSPHORIBOSYLAMINOIMIDAZOLE-SUCCINOCARBOXAMIDE SYNTHASE"/>
    <property type="match status" value="1"/>
</dbReference>
<dbReference type="PANTHER" id="PTHR43700:SF1">
    <property type="entry name" value="PHOSPHORIBOSYLAMINOIMIDAZOLE-SUCCINOCARBOXAMIDE SYNTHASE"/>
    <property type="match status" value="1"/>
</dbReference>
<dbReference type="Pfam" id="PF01259">
    <property type="entry name" value="SAICAR_synt"/>
    <property type="match status" value="1"/>
</dbReference>
<dbReference type="SUPFAM" id="SSF56104">
    <property type="entry name" value="SAICAR synthase-like"/>
    <property type="match status" value="1"/>
</dbReference>
<dbReference type="PROSITE" id="PS01057">
    <property type="entry name" value="SAICAR_SYNTHETASE_1"/>
    <property type="match status" value="1"/>
</dbReference>
<gene>
    <name evidence="1" type="primary">purC</name>
    <name type="ordered locus">Mvan_5138</name>
</gene>
<evidence type="ECO:0000255" key="1">
    <source>
        <dbReference type="HAMAP-Rule" id="MF_00137"/>
    </source>
</evidence>
<comment type="catalytic activity">
    <reaction evidence="1">
        <text>5-amino-1-(5-phospho-D-ribosyl)imidazole-4-carboxylate + L-aspartate + ATP = (2S)-2-[5-amino-1-(5-phospho-beta-D-ribosyl)imidazole-4-carboxamido]succinate + ADP + phosphate + 2 H(+)</text>
        <dbReference type="Rhea" id="RHEA:22628"/>
        <dbReference type="ChEBI" id="CHEBI:15378"/>
        <dbReference type="ChEBI" id="CHEBI:29991"/>
        <dbReference type="ChEBI" id="CHEBI:30616"/>
        <dbReference type="ChEBI" id="CHEBI:43474"/>
        <dbReference type="ChEBI" id="CHEBI:58443"/>
        <dbReference type="ChEBI" id="CHEBI:77657"/>
        <dbReference type="ChEBI" id="CHEBI:456216"/>
        <dbReference type="EC" id="6.3.2.6"/>
    </reaction>
</comment>
<comment type="pathway">
    <text evidence="1">Purine metabolism; IMP biosynthesis via de novo pathway; 5-amino-1-(5-phospho-D-ribosyl)imidazole-4-carboxamide from 5-amino-1-(5-phospho-D-ribosyl)imidazole-4-carboxylate: step 1/2.</text>
</comment>
<comment type="similarity">
    <text evidence="1">Belongs to the SAICAR synthetase family.</text>
</comment>
<feature type="chain" id="PRO_1000018741" description="Phosphoribosylaminoimidazole-succinocarboxamide synthase">
    <location>
        <begin position="1"/>
        <end position="301"/>
    </location>
</feature>
<proteinExistence type="inferred from homology"/>
<reference key="1">
    <citation type="submission" date="2006-12" db="EMBL/GenBank/DDBJ databases">
        <title>Complete sequence of Mycobacterium vanbaalenii PYR-1.</title>
        <authorList>
            <consortium name="US DOE Joint Genome Institute"/>
            <person name="Copeland A."/>
            <person name="Lucas S."/>
            <person name="Lapidus A."/>
            <person name="Barry K."/>
            <person name="Detter J.C."/>
            <person name="Glavina del Rio T."/>
            <person name="Hammon N."/>
            <person name="Israni S."/>
            <person name="Dalin E."/>
            <person name="Tice H."/>
            <person name="Pitluck S."/>
            <person name="Singan V."/>
            <person name="Schmutz J."/>
            <person name="Larimer F."/>
            <person name="Land M."/>
            <person name="Hauser L."/>
            <person name="Kyrpides N."/>
            <person name="Anderson I.J."/>
            <person name="Miller C."/>
            <person name="Richardson P."/>
        </authorList>
    </citation>
    <scope>NUCLEOTIDE SEQUENCE [LARGE SCALE GENOMIC DNA]</scope>
    <source>
        <strain>DSM 7251 / JCM 13017 / BCRC 16820 / KCTC 9966 / NRRL B-24157 / PYR-1</strain>
    </source>
</reference>
<sequence>MRPALTDYQHLASGKVRELYRIDGGHLLFVATDRISAYDHILKSEIPDKGRVLTAMSVFFFDYLSRTAAVSNHLAGPPDDERIPEEVLGRALVVEQLEMLPVEAVARGYLTGSGLIDYQQTGTVCGIALPSGLVEASRFDEPLFTPATKAELGEHDVNISFDDVVGLIGAERAEELRDRTLRTYSQGAAHALTRGIIVADTKFEFGVDARGELKLADEVFTPDSSRYWRADDYAEGQVQNSFDKQFVRNWLTGPDSGWDRHGDQPPPPLPPDIVDATRARYIEAYERISGLRFDDWIGVSA</sequence>
<accession>A1TFF9</accession>
<name>PUR7_MYCVP</name>